<sequence length="442" mass="50997">MAPLNSQAAGEEESNYQCRFPRFMHLSWKRPYLTRVFDLAVIQKKQKKEMSDSEEKKCNDDSKQPVLVLDLLRSILERLSFVDFHRGRCISLEWYSASESCLAVKNPTSPWIILFPSENVESKNDSCKLYNPRDHSSYIVRDLGFDLARSRCLASSGSWFLMLDHRTDFHILNLFTRVRIPLPPLESTGDGNVFKRVYENVSDGSCIKIDNAVLWVDEKRRDYLVVWNISRLFGYHKKGDENYSWKVFKPLKKNDCCIDMAFKENKLYVLSVTRKVTVYDFSGGDSPVKCATFPSLRFRNGYSYNTQGCHYKVAVTLSGEVLIIVAKVEPYPRVECFFAVYKMDHNSSGYERISLGGEALLLDLGITVEANCMKNCIYFSNDQFHRYNGKSLCDDSNKNGICVYHIRSRYVVQVFEHLTASSKIAFKDARSFFPIFGGKWLL</sequence>
<reference key="1">
    <citation type="journal article" date="1999" name="Nature">
        <title>Sequence and analysis of chromosome 4 of the plant Arabidopsis thaliana.</title>
        <authorList>
            <person name="Mayer K.F.X."/>
            <person name="Schueller C."/>
            <person name="Wambutt R."/>
            <person name="Murphy G."/>
            <person name="Volckaert G."/>
            <person name="Pohl T."/>
            <person name="Duesterhoeft A."/>
            <person name="Stiekema W."/>
            <person name="Entian K.-D."/>
            <person name="Terryn N."/>
            <person name="Harris B."/>
            <person name="Ansorge W."/>
            <person name="Brandt P."/>
            <person name="Grivell L.A."/>
            <person name="Rieger M."/>
            <person name="Weichselgartner M."/>
            <person name="de Simone V."/>
            <person name="Obermaier B."/>
            <person name="Mache R."/>
            <person name="Mueller M."/>
            <person name="Kreis M."/>
            <person name="Delseny M."/>
            <person name="Puigdomenech P."/>
            <person name="Watson M."/>
            <person name="Schmidtheini T."/>
            <person name="Reichert B."/>
            <person name="Portetelle D."/>
            <person name="Perez-Alonso M."/>
            <person name="Boutry M."/>
            <person name="Bancroft I."/>
            <person name="Vos P."/>
            <person name="Hoheisel J."/>
            <person name="Zimmermann W."/>
            <person name="Wedler H."/>
            <person name="Ridley P."/>
            <person name="Langham S.-A."/>
            <person name="McCullagh B."/>
            <person name="Bilham L."/>
            <person name="Robben J."/>
            <person name="van der Schueren J."/>
            <person name="Grymonprez B."/>
            <person name="Chuang Y.-J."/>
            <person name="Vandenbussche F."/>
            <person name="Braeken M."/>
            <person name="Weltjens I."/>
            <person name="Voet M."/>
            <person name="Bastiaens I."/>
            <person name="Aert R."/>
            <person name="Defoor E."/>
            <person name="Weitzenegger T."/>
            <person name="Bothe G."/>
            <person name="Ramsperger U."/>
            <person name="Hilbert H."/>
            <person name="Braun M."/>
            <person name="Holzer E."/>
            <person name="Brandt A."/>
            <person name="Peters S."/>
            <person name="van Staveren M."/>
            <person name="Dirkse W."/>
            <person name="Mooijman P."/>
            <person name="Klein Lankhorst R."/>
            <person name="Rose M."/>
            <person name="Hauf J."/>
            <person name="Koetter P."/>
            <person name="Berneiser S."/>
            <person name="Hempel S."/>
            <person name="Feldpausch M."/>
            <person name="Lamberth S."/>
            <person name="Van den Daele H."/>
            <person name="De Keyser A."/>
            <person name="Buysshaert C."/>
            <person name="Gielen J."/>
            <person name="Villarroel R."/>
            <person name="De Clercq R."/>
            <person name="van Montagu M."/>
            <person name="Rogers J."/>
            <person name="Cronin A."/>
            <person name="Quail M.A."/>
            <person name="Bray-Allen S."/>
            <person name="Clark L."/>
            <person name="Doggett J."/>
            <person name="Hall S."/>
            <person name="Kay M."/>
            <person name="Lennard N."/>
            <person name="McLay K."/>
            <person name="Mayes R."/>
            <person name="Pettett A."/>
            <person name="Rajandream M.A."/>
            <person name="Lyne M."/>
            <person name="Benes V."/>
            <person name="Rechmann S."/>
            <person name="Borkova D."/>
            <person name="Bloecker H."/>
            <person name="Scharfe M."/>
            <person name="Grimm M."/>
            <person name="Loehnert T.-H."/>
            <person name="Dose S."/>
            <person name="de Haan M."/>
            <person name="Maarse A.C."/>
            <person name="Schaefer M."/>
            <person name="Mueller-Auer S."/>
            <person name="Gabel C."/>
            <person name="Fuchs M."/>
            <person name="Fartmann B."/>
            <person name="Granderath K."/>
            <person name="Dauner D."/>
            <person name="Herzl A."/>
            <person name="Neumann S."/>
            <person name="Argiriou A."/>
            <person name="Vitale D."/>
            <person name="Liguori R."/>
            <person name="Piravandi E."/>
            <person name="Massenet O."/>
            <person name="Quigley F."/>
            <person name="Clabauld G."/>
            <person name="Muendlein A."/>
            <person name="Felber R."/>
            <person name="Schnabl S."/>
            <person name="Hiller R."/>
            <person name="Schmidt W."/>
            <person name="Lecharny A."/>
            <person name="Aubourg S."/>
            <person name="Chefdor F."/>
            <person name="Cooke R."/>
            <person name="Berger C."/>
            <person name="Monfort A."/>
            <person name="Casacuberta E."/>
            <person name="Gibbons T."/>
            <person name="Weber N."/>
            <person name="Vandenbol M."/>
            <person name="Bargues M."/>
            <person name="Terol J."/>
            <person name="Torres A."/>
            <person name="Perez-Perez A."/>
            <person name="Purnelle B."/>
            <person name="Bent E."/>
            <person name="Johnson S."/>
            <person name="Tacon D."/>
            <person name="Jesse T."/>
            <person name="Heijnen L."/>
            <person name="Schwarz S."/>
            <person name="Scholler P."/>
            <person name="Heber S."/>
            <person name="Francs P."/>
            <person name="Bielke C."/>
            <person name="Frishman D."/>
            <person name="Haase D."/>
            <person name="Lemcke K."/>
            <person name="Mewes H.-W."/>
            <person name="Stocker S."/>
            <person name="Zaccaria P."/>
            <person name="Bevan M."/>
            <person name="Wilson R.K."/>
            <person name="de la Bastide M."/>
            <person name="Habermann K."/>
            <person name="Parnell L."/>
            <person name="Dedhia N."/>
            <person name="Gnoj L."/>
            <person name="Schutz K."/>
            <person name="Huang E."/>
            <person name="Spiegel L."/>
            <person name="Sekhon M."/>
            <person name="Murray J."/>
            <person name="Sheet P."/>
            <person name="Cordes M."/>
            <person name="Abu-Threideh J."/>
            <person name="Stoneking T."/>
            <person name="Kalicki J."/>
            <person name="Graves T."/>
            <person name="Harmon G."/>
            <person name="Edwards J."/>
            <person name="Latreille P."/>
            <person name="Courtney L."/>
            <person name="Cloud J."/>
            <person name="Abbott A."/>
            <person name="Scott K."/>
            <person name="Johnson D."/>
            <person name="Minx P."/>
            <person name="Bentley D."/>
            <person name="Fulton B."/>
            <person name="Miller N."/>
            <person name="Greco T."/>
            <person name="Kemp K."/>
            <person name="Kramer J."/>
            <person name="Fulton L."/>
            <person name="Mardis E."/>
            <person name="Dante M."/>
            <person name="Pepin K."/>
            <person name="Hillier L.W."/>
            <person name="Nelson J."/>
            <person name="Spieth J."/>
            <person name="Ryan E."/>
            <person name="Andrews S."/>
            <person name="Geisel C."/>
            <person name="Layman D."/>
            <person name="Du H."/>
            <person name="Ali J."/>
            <person name="Berghoff A."/>
            <person name="Jones K."/>
            <person name="Drone K."/>
            <person name="Cotton M."/>
            <person name="Joshu C."/>
            <person name="Antonoiu B."/>
            <person name="Zidanic M."/>
            <person name="Strong C."/>
            <person name="Sun H."/>
            <person name="Lamar B."/>
            <person name="Yordan C."/>
            <person name="Ma P."/>
            <person name="Zhong J."/>
            <person name="Preston R."/>
            <person name="Vil D."/>
            <person name="Shekher M."/>
            <person name="Matero A."/>
            <person name="Shah R."/>
            <person name="Swaby I.K."/>
            <person name="O'Shaughnessy A."/>
            <person name="Rodriguez M."/>
            <person name="Hoffman J."/>
            <person name="Till S."/>
            <person name="Granat S."/>
            <person name="Shohdy N."/>
            <person name="Hasegawa A."/>
            <person name="Hameed A."/>
            <person name="Lodhi M."/>
            <person name="Johnson A."/>
            <person name="Chen E."/>
            <person name="Marra M.A."/>
            <person name="Martienssen R."/>
            <person name="McCombie W.R."/>
        </authorList>
    </citation>
    <scope>NUCLEOTIDE SEQUENCE [LARGE SCALE GENOMIC DNA]</scope>
    <source>
        <strain>cv. Columbia</strain>
    </source>
</reference>
<reference key="2">
    <citation type="journal article" date="2017" name="Plant J.">
        <title>Araport11: a complete reannotation of the Arabidopsis thaliana reference genome.</title>
        <authorList>
            <person name="Cheng C.Y."/>
            <person name="Krishnakumar V."/>
            <person name="Chan A.P."/>
            <person name="Thibaud-Nissen F."/>
            <person name="Schobel S."/>
            <person name="Town C.D."/>
        </authorList>
    </citation>
    <scope>GENOME REANNOTATION</scope>
    <source>
        <strain>cv. Columbia</strain>
    </source>
</reference>
<reference key="3">
    <citation type="journal article" date="2017" name="Mol. Cell">
        <title>The F-box protein KIB1 mediates brassinosteroid-induced inactivation and degradation of GSK3-like kinases in Arabidopsis.</title>
        <authorList>
            <person name="Zhu J.-Y."/>
            <person name="Li Y."/>
            <person name="Cao D.-M."/>
            <person name="Yang H."/>
            <person name="Oh E."/>
            <person name="Bi Y."/>
            <person name="Zhu S."/>
            <person name="Wang Z.-Y."/>
        </authorList>
    </citation>
    <scope>FUNCTION</scope>
    <scope>DISRUPTION PHENOTYPE</scope>
    <scope>INTERACTION WITH ASK7/BIN2/SK21</scope>
    <source>
        <strain>cv. Columbia</strain>
        <strain>cv. Wassilewskija</strain>
    </source>
</reference>
<evidence type="ECO:0000250" key="1">
    <source>
        <dbReference type="UniProtKB" id="Q9SU05"/>
    </source>
</evidence>
<evidence type="ECO:0000255" key="2"/>
<evidence type="ECO:0000255" key="3">
    <source>
        <dbReference type="PROSITE-ProRule" id="PRU00768"/>
    </source>
</evidence>
<evidence type="ECO:0000269" key="4">
    <source>
    </source>
</evidence>
<evidence type="ECO:0000303" key="5">
    <source>
    </source>
</evidence>
<evidence type="ECO:0000312" key="6">
    <source>
        <dbReference type="Araport" id="AT4G12820"/>
    </source>
</evidence>
<evidence type="ECO:0000312" key="7">
    <source>
        <dbReference type="EMBL" id="CAB40999.1"/>
    </source>
</evidence>
<comment type="function">
    <text evidence="4">Component of SCF(ASK-cullin-F-box) E3 ubiquitin ligase complexes, which may mediate the ubiquitination and subsequent proteasomal degradation of target proteins. Required for brassinosteroid (BR) signal transduction. Mediates ASK7/BIN2/SK21 inactivation both by competing with substrate binding (e.g. BZR1) and by promoting its ubiquitination and subsequent proteasomal degradation.</text>
</comment>
<comment type="subunit">
    <text evidence="4">Interacts with ASK7/BIN2/SK21.</text>
</comment>
<comment type="subcellular location">
    <subcellularLocation>
        <location evidence="1">Cytoplasm</location>
    </subcellularLocation>
    <subcellularLocation>
        <location evidence="1">Nucleus</location>
        <location evidence="1">Nucleolus</location>
    </subcellularLocation>
    <subcellularLocation>
        <location evidence="3">Nucleus</location>
    </subcellularLocation>
</comment>
<comment type="disruption phenotype">
    <text evidence="4">Abolished brassinosteroid (BR)-induced ASK7/BIN2/SK21 degradation, and BR-insensitivity. Suppression of the constitutive BR-response phenotype in the dominant mutant bzr1-1D, and accumulation of phosphorylated BZR1.</text>
</comment>
<gene>
    <name evidence="5" type="primary">KIB2</name>
    <name evidence="6" type="ordered locus">At4g12820</name>
    <name evidence="7" type="ORF">T20K18.170</name>
</gene>
<dbReference type="EMBL" id="AL049640">
    <property type="protein sequence ID" value="CAB40999.1"/>
    <property type="molecule type" value="Genomic_DNA"/>
</dbReference>
<dbReference type="EMBL" id="AL161535">
    <property type="protein sequence ID" value="CAB78324.1"/>
    <property type="molecule type" value="Genomic_DNA"/>
</dbReference>
<dbReference type="EMBL" id="CP002687">
    <property type="protein sequence ID" value="AEE83188.1"/>
    <property type="molecule type" value="Genomic_DNA"/>
</dbReference>
<dbReference type="PIR" id="T06640">
    <property type="entry name" value="T06640"/>
</dbReference>
<dbReference type="RefSeq" id="NP_193018.1">
    <property type="nucleotide sequence ID" value="NM_117351.2"/>
</dbReference>
<dbReference type="PaxDb" id="3702-AT4G12820.1"/>
<dbReference type="DNASU" id="826894"/>
<dbReference type="EnsemblPlants" id="AT4G12820.1">
    <property type="protein sequence ID" value="AT4G12820.1"/>
    <property type="gene ID" value="AT4G12820"/>
</dbReference>
<dbReference type="GeneID" id="826894"/>
<dbReference type="Gramene" id="AT4G12820.1">
    <property type="protein sequence ID" value="AT4G12820.1"/>
    <property type="gene ID" value="AT4G12820"/>
</dbReference>
<dbReference type="KEGG" id="ath:AT4G12820"/>
<dbReference type="Araport" id="AT4G12820"/>
<dbReference type="TAIR" id="AT4G12820">
    <property type="gene designation" value="KIB2"/>
</dbReference>
<dbReference type="eggNOG" id="ENOG502S0MJ">
    <property type="taxonomic scope" value="Eukaryota"/>
</dbReference>
<dbReference type="HOGENOM" id="CLU_019286_7_1_1"/>
<dbReference type="InParanoid" id="Q9SU04"/>
<dbReference type="OMA" id="EWYSASE"/>
<dbReference type="PhylomeDB" id="Q9SU04"/>
<dbReference type="PRO" id="PR:Q9SU04"/>
<dbReference type="Proteomes" id="UP000006548">
    <property type="component" value="Chromosome 4"/>
</dbReference>
<dbReference type="ExpressionAtlas" id="Q9SU04">
    <property type="expression patterns" value="baseline and differential"/>
</dbReference>
<dbReference type="GO" id="GO:0005737">
    <property type="term" value="C:cytoplasm"/>
    <property type="evidence" value="ECO:0000250"/>
    <property type="project" value="UniProtKB"/>
</dbReference>
<dbReference type="GO" id="GO:0005730">
    <property type="term" value="C:nucleolus"/>
    <property type="evidence" value="ECO:0000250"/>
    <property type="project" value="UniProtKB"/>
</dbReference>
<dbReference type="GO" id="GO:0009742">
    <property type="term" value="P:brassinosteroid mediated signaling pathway"/>
    <property type="evidence" value="ECO:0000316"/>
    <property type="project" value="TAIR"/>
</dbReference>
<dbReference type="GO" id="GO:1900459">
    <property type="term" value="P:positive regulation of brassinosteroid mediated signaling pathway"/>
    <property type="evidence" value="ECO:0000315"/>
    <property type="project" value="UniProtKB"/>
</dbReference>
<dbReference type="GO" id="GO:0006511">
    <property type="term" value="P:ubiquitin-dependent protein catabolic process"/>
    <property type="evidence" value="ECO:0000314"/>
    <property type="project" value="UniProtKB"/>
</dbReference>
<dbReference type="InterPro" id="IPR050942">
    <property type="entry name" value="F-box_BR-signaling"/>
</dbReference>
<dbReference type="InterPro" id="IPR005174">
    <property type="entry name" value="KIB1-4_b-propeller"/>
</dbReference>
<dbReference type="PANTHER" id="PTHR44259:SF15">
    <property type="entry name" value="F-BOX PROTEIN KIB2-RELATED"/>
    <property type="match status" value="1"/>
</dbReference>
<dbReference type="PANTHER" id="PTHR44259">
    <property type="entry name" value="OS07G0183000 PROTEIN-RELATED"/>
    <property type="match status" value="1"/>
</dbReference>
<dbReference type="Pfam" id="PF03478">
    <property type="entry name" value="Beta-prop_KIB1-4"/>
    <property type="match status" value="1"/>
</dbReference>
<keyword id="KW-1070">Brassinosteroid signaling pathway</keyword>
<keyword id="KW-0963">Cytoplasm</keyword>
<keyword id="KW-0539">Nucleus</keyword>
<keyword id="KW-1185">Reference proteome</keyword>
<keyword id="KW-0677">Repeat</keyword>
<keyword id="KW-0833">Ubl conjugation pathway</keyword>
<feature type="chain" id="PRO_0000396071" description="F-box protein KIB2">
    <location>
        <begin position="1"/>
        <end position="442"/>
    </location>
</feature>
<feature type="domain" description="F-box" evidence="2">
    <location>
        <begin position="62"/>
        <end position="109"/>
    </location>
</feature>
<feature type="short sequence motif" description="Nuclear localization signal" evidence="3">
    <location>
        <begin position="236"/>
        <end position="243"/>
    </location>
</feature>
<name>KIB2_ARATH</name>
<organism>
    <name type="scientific">Arabidopsis thaliana</name>
    <name type="common">Mouse-ear cress</name>
    <dbReference type="NCBI Taxonomy" id="3702"/>
    <lineage>
        <taxon>Eukaryota</taxon>
        <taxon>Viridiplantae</taxon>
        <taxon>Streptophyta</taxon>
        <taxon>Embryophyta</taxon>
        <taxon>Tracheophyta</taxon>
        <taxon>Spermatophyta</taxon>
        <taxon>Magnoliopsida</taxon>
        <taxon>eudicotyledons</taxon>
        <taxon>Gunneridae</taxon>
        <taxon>Pentapetalae</taxon>
        <taxon>rosids</taxon>
        <taxon>malvids</taxon>
        <taxon>Brassicales</taxon>
        <taxon>Brassicaceae</taxon>
        <taxon>Camelineae</taxon>
        <taxon>Arabidopsis</taxon>
    </lineage>
</organism>
<protein>
    <recommendedName>
        <fullName evidence="5">F-box protein KIB2</fullName>
    </recommendedName>
    <alternativeName>
        <fullName evidence="5">Protein KINK SUPPRESSED IN BZR1-1D 2</fullName>
    </alternativeName>
</protein>
<accession>Q9SU04</accession>
<proteinExistence type="evidence at protein level"/>